<feature type="chain" id="PRO_0000249980" description="Anhydro-N-acetylmuramic acid kinase">
    <location>
        <begin position="1"/>
        <end position="373"/>
    </location>
</feature>
<feature type="binding site" evidence="1">
    <location>
        <begin position="13"/>
        <end position="20"/>
    </location>
    <ligand>
        <name>ATP</name>
        <dbReference type="ChEBI" id="CHEBI:30616"/>
    </ligand>
</feature>
<proteinExistence type="inferred from homology"/>
<comment type="function">
    <text evidence="1">Catalyzes the specific phosphorylation of 1,6-anhydro-N-acetylmuramic acid (anhMurNAc) with the simultaneous cleavage of the 1,6-anhydro ring, generating MurNAc-6-P. Is required for the utilization of anhMurNAc either imported from the medium or derived from its own cell wall murein, and thus plays a role in cell wall recycling.</text>
</comment>
<comment type="catalytic activity">
    <reaction evidence="1">
        <text>1,6-anhydro-N-acetyl-beta-muramate + ATP + H2O = N-acetyl-D-muramate 6-phosphate + ADP + H(+)</text>
        <dbReference type="Rhea" id="RHEA:24952"/>
        <dbReference type="ChEBI" id="CHEBI:15377"/>
        <dbReference type="ChEBI" id="CHEBI:15378"/>
        <dbReference type="ChEBI" id="CHEBI:30616"/>
        <dbReference type="ChEBI" id="CHEBI:58690"/>
        <dbReference type="ChEBI" id="CHEBI:58722"/>
        <dbReference type="ChEBI" id="CHEBI:456216"/>
        <dbReference type="EC" id="2.7.1.170"/>
    </reaction>
</comment>
<comment type="pathway">
    <text evidence="1">Amino-sugar metabolism; 1,6-anhydro-N-acetylmuramate degradation.</text>
</comment>
<comment type="pathway">
    <text evidence="1">Cell wall biogenesis; peptidoglycan recycling.</text>
</comment>
<comment type="similarity">
    <text evidence="1">Belongs to the anhydro-N-acetylmuramic acid kinase family.</text>
</comment>
<keyword id="KW-0067">ATP-binding</keyword>
<keyword id="KW-0119">Carbohydrate metabolism</keyword>
<keyword id="KW-0418">Kinase</keyword>
<keyword id="KW-0547">Nucleotide-binding</keyword>
<keyword id="KW-0808">Transferase</keyword>
<protein>
    <recommendedName>
        <fullName evidence="1">Anhydro-N-acetylmuramic acid kinase</fullName>
        <ecNumber evidence="1">2.7.1.170</ecNumber>
    </recommendedName>
    <alternativeName>
        <fullName evidence="1">AnhMurNAc kinase</fullName>
    </alternativeName>
</protein>
<gene>
    <name evidence="1" type="primary">anmK</name>
    <name type="ordered locus">BruAb1_0936</name>
</gene>
<name>ANMK_BRUAB</name>
<dbReference type="EC" id="2.7.1.170" evidence="1"/>
<dbReference type="EMBL" id="AE017223">
    <property type="protein sequence ID" value="AAX74300.1"/>
    <property type="molecule type" value="Genomic_DNA"/>
</dbReference>
<dbReference type="RefSeq" id="WP_002964051.1">
    <property type="nucleotide sequence ID" value="NC_006932.1"/>
</dbReference>
<dbReference type="SMR" id="Q57DI4"/>
<dbReference type="EnsemblBacteria" id="AAX74300">
    <property type="protein sequence ID" value="AAX74300"/>
    <property type="gene ID" value="BruAb1_0936"/>
</dbReference>
<dbReference type="KEGG" id="bmb:BruAb1_0936"/>
<dbReference type="HOGENOM" id="CLU_038782_3_0_5"/>
<dbReference type="UniPathway" id="UPA00343"/>
<dbReference type="UniPathway" id="UPA00544"/>
<dbReference type="Proteomes" id="UP000000540">
    <property type="component" value="Chromosome I"/>
</dbReference>
<dbReference type="GO" id="GO:0005524">
    <property type="term" value="F:ATP binding"/>
    <property type="evidence" value="ECO:0007669"/>
    <property type="project" value="UniProtKB-UniRule"/>
</dbReference>
<dbReference type="GO" id="GO:0016301">
    <property type="term" value="F:kinase activity"/>
    <property type="evidence" value="ECO:0007669"/>
    <property type="project" value="UniProtKB-KW"/>
</dbReference>
<dbReference type="GO" id="GO:0016773">
    <property type="term" value="F:phosphotransferase activity, alcohol group as acceptor"/>
    <property type="evidence" value="ECO:0007669"/>
    <property type="project" value="UniProtKB-UniRule"/>
</dbReference>
<dbReference type="GO" id="GO:0097175">
    <property type="term" value="P:1,6-anhydro-N-acetyl-beta-muramic acid catabolic process"/>
    <property type="evidence" value="ECO:0007669"/>
    <property type="project" value="UniProtKB-UniRule"/>
</dbReference>
<dbReference type="GO" id="GO:0006040">
    <property type="term" value="P:amino sugar metabolic process"/>
    <property type="evidence" value="ECO:0007669"/>
    <property type="project" value="InterPro"/>
</dbReference>
<dbReference type="GO" id="GO:0009254">
    <property type="term" value="P:peptidoglycan turnover"/>
    <property type="evidence" value="ECO:0007669"/>
    <property type="project" value="UniProtKB-UniRule"/>
</dbReference>
<dbReference type="Gene3D" id="3.30.420.40">
    <property type="match status" value="2"/>
</dbReference>
<dbReference type="HAMAP" id="MF_01270">
    <property type="entry name" value="AnhMurNAc_kinase"/>
    <property type="match status" value="1"/>
</dbReference>
<dbReference type="InterPro" id="IPR005338">
    <property type="entry name" value="Anhydro_N_Ac-Mur_kinase"/>
</dbReference>
<dbReference type="InterPro" id="IPR043129">
    <property type="entry name" value="ATPase_NBD"/>
</dbReference>
<dbReference type="NCBIfam" id="NF007141">
    <property type="entry name" value="PRK09585.1-5"/>
    <property type="match status" value="1"/>
</dbReference>
<dbReference type="PANTHER" id="PTHR30605">
    <property type="entry name" value="ANHYDRO-N-ACETYLMURAMIC ACID KINASE"/>
    <property type="match status" value="1"/>
</dbReference>
<dbReference type="PANTHER" id="PTHR30605:SF0">
    <property type="entry name" value="ANHYDRO-N-ACETYLMURAMIC ACID KINASE"/>
    <property type="match status" value="1"/>
</dbReference>
<dbReference type="Pfam" id="PF03702">
    <property type="entry name" value="AnmK"/>
    <property type="match status" value="1"/>
</dbReference>
<dbReference type="SUPFAM" id="SSF53067">
    <property type="entry name" value="Actin-like ATPase domain"/>
    <property type="match status" value="1"/>
</dbReference>
<organism>
    <name type="scientific">Brucella abortus biovar 1 (strain 9-941)</name>
    <dbReference type="NCBI Taxonomy" id="262698"/>
    <lineage>
        <taxon>Bacteria</taxon>
        <taxon>Pseudomonadati</taxon>
        <taxon>Pseudomonadota</taxon>
        <taxon>Alphaproteobacteria</taxon>
        <taxon>Hyphomicrobiales</taxon>
        <taxon>Brucellaceae</taxon>
        <taxon>Brucella/Ochrobactrum group</taxon>
        <taxon>Brucella</taxon>
    </lineage>
</organism>
<accession>Q57DI4</accession>
<sequence>MPDLKRAIGLMSGTSMDGIDIALLATDGENWIERRASASMDYSDGFRARLKAGLVDARAIKDRAERPGLLRQLEHDLTLLHAVAVHDFLHEQGLQPHEIDVIGFHGQTVLHRPNESLTVQIGDGALLARETGIPVVYDMRAEDMRHGGQGAPLIPAYHAALAANLPLGLKGPVVFVNIGGISNLTYVGEDGALIAYDSGPGNMLIDQWMELHGHGRFDPGGATAMSGSVDRNTAHRYLEHEFFKGNHRRSLDRGDFAIPAKGELNLADGARTLAFVSAAAILKSASHLPARPRTYVVSGGGRKNGALMDELTALAEREGAHVIDADNAGFDGDAMEAEAWAYLAVRSLCGLPLTYPSTTGCDKPVSGGVPVRP</sequence>
<reference key="1">
    <citation type="journal article" date="2005" name="J. Bacteriol.">
        <title>Completion of the genome sequence of Brucella abortus and comparison to the highly similar genomes of Brucella melitensis and Brucella suis.</title>
        <authorList>
            <person name="Halling S.M."/>
            <person name="Peterson-Burch B.D."/>
            <person name="Bricker B.J."/>
            <person name="Zuerner R.L."/>
            <person name="Qing Z."/>
            <person name="Li L.-L."/>
            <person name="Kapur V."/>
            <person name="Alt D.P."/>
            <person name="Olsen S.C."/>
        </authorList>
    </citation>
    <scope>NUCLEOTIDE SEQUENCE [LARGE SCALE GENOMIC DNA]</scope>
    <source>
        <strain>9-941</strain>
    </source>
</reference>
<evidence type="ECO:0000255" key="1">
    <source>
        <dbReference type="HAMAP-Rule" id="MF_01270"/>
    </source>
</evidence>